<evidence type="ECO:0000255" key="1">
    <source>
        <dbReference type="HAMAP-Rule" id="MF_00974"/>
    </source>
</evidence>
<proteinExistence type="inferred from homology"/>
<accession>Q8NWB7</accession>
<feature type="chain" id="PRO_0000180524" description="DNA primase">
    <location>
        <begin position="1"/>
        <end position="605"/>
    </location>
</feature>
<feature type="domain" description="Toprim" evidence="1">
    <location>
        <begin position="260"/>
        <end position="341"/>
    </location>
</feature>
<feature type="zinc finger region" description="CHC2-type" evidence="1">
    <location>
        <begin position="38"/>
        <end position="62"/>
    </location>
</feature>
<feature type="binding site" evidence="1">
    <location>
        <position position="266"/>
    </location>
    <ligand>
        <name>Mg(2+)</name>
        <dbReference type="ChEBI" id="CHEBI:18420"/>
        <label>1</label>
        <note>catalytic</note>
    </ligand>
</feature>
<feature type="binding site" evidence="1">
    <location>
        <position position="310"/>
    </location>
    <ligand>
        <name>Mg(2+)</name>
        <dbReference type="ChEBI" id="CHEBI:18420"/>
        <label>1</label>
        <note>catalytic</note>
    </ligand>
</feature>
<feature type="binding site" evidence="1">
    <location>
        <position position="310"/>
    </location>
    <ligand>
        <name>Mg(2+)</name>
        <dbReference type="ChEBI" id="CHEBI:18420"/>
        <label>2</label>
    </ligand>
</feature>
<feature type="binding site" evidence="1">
    <location>
        <position position="312"/>
    </location>
    <ligand>
        <name>Mg(2+)</name>
        <dbReference type="ChEBI" id="CHEBI:18420"/>
        <label>2</label>
    </ligand>
</feature>
<organism>
    <name type="scientific">Staphylococcus aureus (strain MW2)</name>
    <dbReference type="NCBI Taxonomy" id="196620"/>
    <lineage>
        <taxon>Bacteria</taxon>
        <taxon>Bacillati</taxon>
        <taxon>Bacillota</taxon>
        <taxon>Bacilli</taxon>
        <taxon>Bacillales</taxon>
        <taxon>Staphylococcaceae</taxon>
        <taxon>Staphylococcus</taxon>
    </lineage>
</organism>
<name>DNAG_STAAW</name>
<dbReference type="EC" id="2.7.7.101" evidence="1"/>
<dbReference type="EMBL" id="BA000033">
    <property type="protein sequence ID" value="BAB95379.1"/>
    <property type="molecule type" value="Genomic_DNA"/>
</dbReference>
<dbReference type="RefSeq" id="WP_001217235.1">
    <property type="nucleotide sequence ID" value="NC_003923.1"/>
</dbReference>
<dbReference type="SMR" id="Q8NWB7"/>
<dbReference type="KEGG" id="sam:MW1514"/>
<dbReference type="HOGENOM" id="CLU_013501_3_3_9"/>
<dbReference type="GO" id="GO:0005737">
    <property type="term" value="C:cytoplasm"/>
    <property type="evidence" value="ECO:0007669"/>
    <property type="project" value="TreeGrafter"/>
</dbReference>
<dbReference type="GO" id="GO:0000428">
    <property type="term" value="C:DNA-directed RNA polymerase complex"/>
    <property type="evidence" value="ECO:0007669"/>
    <property type="project" value="UniProtKB-KW"/>
</dbReference>
<dbReference type="GO" id="GO:1990077">
    <property type="term" value="C:primosome complex"/>
    <property type="evidence" value="ECO:0007669"/>
    <property type="project" value="UniProtKB-KW"/>
</dbReference>
<dbReference type="GO" id="GO:0005524">
    <property type="term" value="F:ATP binding"/>
    <property type="evidence" value="ECO:0007669"/>
    <property type="project" value="InterPro"/>
</dbReference>
<dbReference type="GO" id="GO:0003677">
    <property type="term" value="F:DNA binding"/>
    <property type="evidence" value="ECO:0007669"/>
    <property type="project" value="UniProtKB-KW"/>
</dbReference>
<dbReference type="GO" id="GO:0003678">
    <property type="term" value="F:DNA helicase activity"/>
    <property type="evidence" value="ECO:0007669"/>
    <property type="project" value="InterPro"/>
</dbReference>
<dbReference type="GO" id="GO:0003899">
    <property type="term" value="F:DNA-directed RNA polymerase activity"/>
    <property type="evidence" value="ECO:0007669"/>
    <property type="project" value="InterPro"/>
</dbReference>
<dbReference type="GO" id="GO:0008270">
    <property type="term" value="F:zinc ion binding"/>
    <property type="evidence" value="ECO:0007669"/>
    <property type="project" value="UniProtKB-UniRule"/>
</dbReference>
<dbReference type="GO" id="GO:0006269">
    <property type="term" value="P:DNA replication, synthesis of primer"/>
    <property type="evidence" value="ECO:0007669"/>
    <property type="project" value="UniProtKB-UniRule"/>
</dbReference>
<dbReference type="CDD" id="cd03364">
    <property type="entry name" value="TOPRIM_DnaG_primases"/>
    <property type="match status" value="1"/>
</dbReference>
<dbReference type="FunFam" id="3.90.580.10:FF:000001">
    <property type="entry name" value="DNA primase"/>
    <property type="match status" value="1"/>
</dbReference>
<dbReference type="FunFam" id="3.90.980.10:FF:000001">
    <property type="entry name" value="DNA primase"/>
    <property type="match status" value="1"/>
</dbReference>
<dbReference type="Gene3D" id="3.40.1360.10">
    <property type="match status" value="1"/>
</dbReference>
<dbReference type="Gene3D" id="3.90.980.10">
    <property type="entry name" value="DNA primase, catalytic core, N-terminal domain"/>
    <property type="match status" value="1"/>
</dbReference>
<dbReference type="Gene3D" id="1.10.860.10">
    <property type="entry name" value="DNAb Helicase, Chain A"/>
    <property type="match status" value="1"/>
</dbReference>
<dbReference type="Gene3D" id="1.20.50.20">
    <property type="entry name" value="DnaG, RNA polymerase domain, helical bundle"/>
    <property type="match status" value="1"/>
</dbReference>
<dbReference type="Gene3D" id="3.90.580.10">
    <property type="entry name" value="Zinc finger, CHC2-type domain"/>
    <property type="match status" value="1"/>
</dbReference>
<dbReference type="HAMAP" id="MF_00974">
    <property type="entry name" value="DNA_primase_DnaG"/>
    <property type="match status" value="1"/>
</dbReference>
<dbReference type="InterPro" id="IPR036185">
    <property type="entry name" value="DNA_heli_DnaB-like_N_sf"/>
</dbReference>
<dbReference type="InterPro" id="IPR016136">
    <property type="entry name" value="DNA_helicase_N/primase_C"/>
</dbReference>
<dbReference type="InterPro" id="IPR037068">
    <property type="entry name" value="DNA_primase_core_N_sf"/>
</dbReference>
<dbReference type="InterPro" id="IPR006295">
    <property type="entry name" value="DNA_primase_DnaG"/>
</dbReference>
<dbReference type="InterPro" id="IPR036977">
    <property type="entry name" value="DNA_primase_Znf_CHC2"/>
</dbReference>
<dbReference type="InterPro" id="IPR030846">
    <property type="entry name" value="DnaG_bac"/>
</dbReference>
<dbReference type="InterPro" id="IPR048453">
    <property type="entry name" value="DnaG_cat_HB"/>
</dbReference>
<dbReference type="InterPro" id="IPR013264">
    <property type="entry name" value="DNAG_N"/>
</dbReference>
<dbReference type="InterPro" id="IPR050219">
    <property type="entry name" value="DnaG_primase"/>
</dbReference>
<dbReference type="InterPro" id="IPR034151">
    <property type="entry name" value="TOPRIM_DnaG_bac"/>
</dbReference>
<dbReference type="InterPro" id="IPR006171">
    <property type="entry name" value="TOPRIM_dom"/>
</dbReference>
<dbReference type="InterPro" id="IPR002694">
    <property type="entry name" value="Znf_CHC2"/>
</dbReference>
<dbReference type="NCBIfam" id="TIGR01391">
    <property type="entry name" value="dnaG"/>
    <property type="match status" value="1"/>
</dbReference>
<dbReference type="PANTHER" id="PTHR30313">
    <property type="entry name" value="DNA PRIMASE"/>
    <property type="match status" value="1"/>
</dbReference>
<dbReference type="PANTHER" id="PTHR30313:SF2">
    <property type="entry name" value="DNA PRIMASE"/>
    <property type="match status" value="1"/>
</dbReference>
<dbReference type="Pfam" id="PF21650">
    <property type="entry name" value="DnaG_cat_HB"/>
    <property type="match status" value="1"/>
</dbReference>
<dbReference type="Pfam" id="PF08275">
    <property type="entry name" value="DNAG_N"/>
    <property type="match status" value="1"/>
</dbReference>
<dbReference type="Pfam" id="PF13155">
    <property type="entry name" value="Toprim_2"/>
    <property type="match status" value="1"/>
</dbReference>
<dbReference type="Pfam" id="PF01807">
    <property type="entry name" value="Zn_ribbon_DnaG"/>
    <property type="match status" value="1"/>
</dbReference>
<dbReference type="PIRSF" id="PIRSF002811">
    <property type="entry name" value="DnaG"/>
    <property type="match status" value="1"/>
</dbReference>
<dbReference type="SMART" id="SM00493">
    <property type="entry name" value="TOPRIM"/>
    <property type="match status" value="1"/>
</dbReference>
<dbReference type="SMART" id="SM00400">
    <property type="entry name" value="ZnF_CHCC"/>
    <property type="match status" value="1"/>
</dbReference>
<dbReference type="SUPFAM" id="SSF56731">
    <property type="entry name" value="DNA primase core"/>
    <property type="match status" value="1"/>
</dbReference>
<dbReference type="SUPFAM" id="SSF48024">
    <property type="entry name" value="N-terminal domain of DnaB helicase"/>
    <property type="match status" value="1"/>
</dbReference>
<dbReference type="SUPFAM" id="SSF57783">
    <property type="entry name" value="Zinc beta-ribbon"/>
    <property type="match status" value="1"/>
</dbReference>
<dbReference type="PROSITE" id="PS50880">
    <property type="entry name" value="TOPRIM"/>
    <property type="match status" value="1"/>
</dbReference>
<sequence length="605" mass="70074">MRIDQSIINEIKDKTDILDLVSEYVKLEKRGRNYIGLCPFHDEKTPSFTVSEDKQICHCFGCKKGGNVFQFTQEIKDISFVEAVKELGDRVNVAVDIEATQFNSNVQIASDDLQMIEMHELIQEFYYYALTKTVEGEQALTYLQERGFTDALIKERGIGFAPDSSHFCHDFLQKKGYDIELAYEAGLLSRNEENFSYYDRFRNRIMFPLKNAQGRIVGYSGRTYTGQEPKYLNSPETPIFQKRKLLYNLDKARKSIRKLDEIVLLEGFMDVIKSDTAGLKNVVATMGTQLSDEHITFIRKLTLNITLMFDGDFAGSEATLKTGQHLLQQGLNVFVIQLPSGMDPDEYIGKYGNDAFTAFVKNDKKSFAHYKVSILKDEIAHNDLSYERYLKELSHDISLMKSSILQQKALNDVAPFFNVSPEQLANEIQFNQAPANYYPDDEYGGYDEYGGYIEPEPIGMAQFDNLSRQEKAERAFLKHLMRDKDTFLNYYESVDKDNFTNQHFKYVFEVLHDFYAENDQYNISDAVQYVNSNELRETLISLEQYNLNDEPYENEIDDYVNVINEKGQETIESLNHKLREATRIGDVELQKYYLQQIVAKNKERM</sequence>
<protein>
    <recommendedName>
        <fullName evidence="1">DNA primase</fullName>
        <ecNumber evidence="1">2.7.7.101</ecNumber>
    </recommendedName>
</protein>
<gene>
    <name evidence="1" type="primary">dnaG</name>
    <name type="ordered locus">MW1514</name>
</gene>
<reference key="1">
    <citation type="journal article" date="2002" name="Lancet">
        <title>Genome and virulence determinants of high virulence community-acquired MRSA.</title>
        <authorList>
            <person name="Baba T."/>
            <person name="Takeuchi F."/>
            <person name="Kuroda M."/>
            <person name="Yuzawa H."/>
            <person name="Aoki K."/>
            <person name="Oguchi A."/>
            <person name="Nagai Y."/>
            <person name="Iwama N."/>
            <person name="Asano K."/>
            <person name="Naimi T."/>
            <person name="Kuroda H."/>
            <person name="Cui L."/>
            <person name="Yamamoto K."/>
            <person name="Hiramatsu K."/>
        </authorList>
    </citation>
    <scope>NUCLEOTIDE SEQUENCE [LARGE SCALE GENOMIC DNA]</scope>
    <source>
        <strain>MW2</strain>
    </source>
</reference>
<comment type="function">
    <text evidence="1">RNA polymerase that catalyzes the synthesis of short RNA molecules used as primers for DNA polymerase during DNA replication.</text>
</comment>
<comment type="catalytic activity">
    <reaction evidence="1">
        <text>ssDNA + n NTP = ssDNA/pppN(pN)n-1 hybrid + (n-1) diphosphate.</text>
        <dbReference type="EC" id="2.7.7.101"/>
    </reaction>
</comment>
<comment type="cofactor">
    <cofactor evidence="1">
        <name>Zn(2+)</name>
        <dbReference type="ChEBI" id="CHEBI:29105"/>
    </cofactor>
    <text evidence="1">Binds 1 zinc ion per monomer.</text>
</comment>
<comment type="cofactor">
    <cofactor evidence="1">
        <name>Mg(2+)</name>
        <dbReference type="ChEBI" id="CHEBI:18420"/>
    </cofactor>
    <text evidence="1">Binds two Mg(2+) per subunit.</text>
</comment>
<comment type="subunit">
    <text evidence="1">Monomer. Interacts with DnaB.</text>
</comment>
<comment type="domain">
    <text evidence="1">Contains an N-terminal zinc-binding domain, a central core domain that contains the primase activity, and a C-terminal DnaB-binding domain.</text>
</comment>
<comment type="similarity">
    <text evidence="1">Belongs to the DnaG primase family.</text>
</comment>
<keyword id="KW-0235">DNA replication</keyword>
<keyword id="KW-0238">DNA-binding</keyword>
<keyword id="KW-0240">DNA-directed RNA polymerase</keyword>
<keyword id="KW-0460">Magnesium</keyword>
<keyword id="KW-0479">Metal-binding</keyword>
<keyword id="KW-0548">Nucleotidyltransferase</keyword>
<keyword id="KW-0639">Primosome</keyword>
<keyword id="KW-0804">Transcription</keyword>
<keyword id="KW-0808">Transferase</keyword>
<keyword id="KW-0862">Zinc</keyword>
<keyword id="KW-0863">Zinc-finger</keyword>